<organism>
    <name type="scientific">Brucella suis biovar 1 (strain 1330)</name>
    <dbReference type="NCBI Taxonomy" id="204722"/>
    <lineage>
        <taxon>Bacteria</taxon>
        <taxon>Pseudomonadati</taxon>
        <taxon>Pseudomonadota</taxon>
        <taxon>Alphaproteobacteria</taxon>
        <taxon>Hyphomicrobiales</taxon>
        <taxon>Brucellaceae</taxon>
        <taxon>Brucella/Ochrobactrum group</taxon>
        <taxon>Brucella</taxon>
    </lineage>
</organism>
<proteinExistence type="inferred from homology"/>
<reference key="1">
    <citation type="journal article" date="2002" name="Proc. Natl. Acad. Sci. U.S.A.">
        <title>The Brucella suis genome reveals fundamental similarities between animal and plant pathogens and symbionts.</title>
        <authorList>
            <person name="Paulsen I.T."/>
            <person name="Seshadri R."/>
            <person name="Nelson K.E."/>
            <person name="Eisen J.A."/>
            <person name="Heidelberg J.F."/>
            <person name="Read T.D."/>
            <person name="Dodson R.J."/>
            <person name="Umayam L.A."/>
            <person name="Brinkac L.M."/>
            <person name="Beanan M.J."/>
            <person name="Daugherty S.C."/>
            <person name="DeBoy R.T."/>
            <person name="Durkin A.S."/>
            <person name="Kolonay J.F."/>
            <person name="Madupu R."/>
            <person name="Nelson W.C."/>
            <person name="Ayodeji B."/>
            <person name="Kraul M."/>
            <person name="Shetty J."/>
            <person name="Malek J.A."/>
            <person name="Van Aken S.E."/>
            <person name="Riedmuller S."/>
            <person name="Tettelin H."/>
            <person name="Gill S.R."/>
            <person name="White O."/>
            <person name="Salzberg S.L."/>
            <person name="Hoover D.L."/>
            <person name="Lindler L.E."/>
            <person name="Halling S.M."/>
            <person name="Boyle S.M."/>
            <person name="Fraser C.M."/>
        </authorList>
    </citation>
    <scope>NUCLEOTIDE SEQUENCE [LARGE SCALE GENOMIC DNA]</scope>
    <source>
        <strain>1330</strain>
    </source>
</reference>
<reference key="2">
    <citation type="journal article" date="2011" name="J. Bacteriol.">
        <title>Revised genome sequence of Brucella suis 1330.</title>
        <authorList>
            <person name="Tae H."/>
            <person name="Shallom S."/>
            <person name="Settlage R."/>
            <person name="Preston D."/>
            <person name="Adams L.G."/>
            <person name="Garner H.R."/>
        </authorList>
    </citation>
    <scope>NUCLEOTIDE SEQUENCE [LARGE SCALE GENOMIC DNA]</scope>
    <source>
        <strain>1330</strain>
    </source>
</reference>
<evidence type="ECO:0000255" key="1">
    <source>
        <dbReference type="HAMAP-Rule" id="MF_00688"/>
    </source>
</evidence>
<evidence type="ECO:0000305" key="2"/>
<sequence length="204" mass="23153">MTAEAPPDDDIIEPEMLLRAYATGIFPMAEEADDPEVFWVRPEKRGVIPLDGFHIPRSLQKTIRQGIFEIRLDSNFAGVIEGCASGTGERARTWINEPIRRAYAKLFEIGHCHTVEAWYEGKLAGGLYGVTLGRAFFGESMFTRKRDASKVCLAYLVQHLSRQGFVLLDTQFTTPHLERFGALEVPRKEYEEMLERALEGIARF</sequence>
<comment type="function">
    <text evidence="1">Functions in the N-end rule pathway of protein degradation where it conjugates Leu, Phe and, less efficiently, Met from aminoacyl-tRNAs to the N-termini of proteins containing an N-terminal arginine or lysine.</text>
</comment>
<comment type="catalytic activity">
    <reaction evidence="1">
        <text>N-terminal L-lysyl-[protein] + L-leucyl-tRNA(Leu) = N-terminal L-leucyl-L-lysyl-[protein] + tRNA(Leu) + H(+)</text>
        <dbReference type="Rhea" id="RHEA:12340"/>
        <dbReference type="Rhea" id="RHEA-COMP:9613"/>
        <dbReference type="Rhea" id="RHEA-COMP:9622"/>
        <dbReference type="Rhea" id="RHEA-COMP:12670"/>
        <dbReference type="Rhea" id="RHEA-COMP:12671"/>
        <dbReference type="ChEBI" id="CHEBI:15378"/>
        <dbReference type="ChEBI" id="CHEBI:65249"/>
        <dbReference type="ChEBI" id="CHEBI:78442"/>
        <dbReference type="ChEBI" id="CHEBI:78494"/>
        <dbReference type="ChEBI" id="CHEBI:133043"/>
        <dbReference type="EC" id="2.3.2.6"/>
    </reaction>
</comment>
<comment type="catalytic activity">
    <reaction evidence="1">
        <text>N-terminal L-arginyl-[protein] + L-leucyl-tRNA(Leu) = N-terminal L-leucyl-L-arginyl-[protein] + tRNA(Leu) + H(+)</text>
        <dbReference type="Rhea" id="RHEA:50416"/>
        <dbReference type="Rhea" id="RHEA-COMP:9613"/>
        <dbReference type="Rhea" id="RHEA-COMP:9622"/>
        <dbReference type="Rhea" id="RHEA-COMP:12672"/>
        <dbReference type="Rhea" id="RHEA-COMP:12673"/>
        <dbReference type="ChEBI" id="CHEBI:15378"/>
        <dbReference type="ChEBI" id="CHEBI:64719"/>
        <dbReference type="ChEBI" id="CHEBI:78442"/>
        <dbReference type="ChEBI" id="CHEBI:78494"/>
        <dbReference type="ChEBI" id="CHEBI:133044"/>
        <dbReference type="EC" id="2.3.2.6"/>
    </reaction>
</comment>
<comment type="catalytic activity">
    <reaction evidence="1">
        <text>L-phenylalanyl-tRNA(Phe) + an N-terminal L-alpha-aminoacyl-[protein] = an N-terminal L-phenylalanyl-L-alpha-aminoacyl-[protein] + tRNA(Phe)</text>
        <dbReference type="Rhea" id="RHEA:43632"/>
        <dbReference type="Rhea" id="RHEA-COMP:9668"/>
        <dbReference type="Rhea" id="RHEA-COMP:9699"/>
        <dbReference type="Rhea" id="RHEA-COMP:10636"/>
        <dbReference type="Rhea" id="RHEA-COMP:10637"/>
        <dbReference type="ChEBI" id="CHEBI:78442"/>
        <dbReference type="ChEBI" id="CHEBI:78531"/>
        <dbReference type="ChEBI" id="CHEBI:78597"/>
        <dbReference type="ChEBI" id="CHEBI:83561"/>
        <dbReference type="EC" id="2.3.2.6"/>
    </reaction>
</comment>
<comment type="subcellular location">
    <subcellularLocation>
        <location evidence="1">Cytoplasm</location>
    </subcellularLocation>
</comment>
<comment type="similarity">
    <text evidence="1">Belongs to the L/F-transferase family.</text>
</comment>
<comment type="sequence caution" evidence="2">
    <conflict type="frameshift">
        <sequence resource="EMBL-CDS" id="AAN29833"/>
    </conflict>
</comment>
<comment type="sequence caution" evidence="2">
    <conflict type="frameshift">
        <sequence resource="EMBL-CDS" id="AEM18250"/>
    </conflict>
</comment>
<name>LFTR_BRUSU</name>
<accession>P0A4S8</accession>
<accession>G0K9D3</accession>
<accession>Q8G123</accession>
<accession>Q8YGU3</accession>
<dbReference type="EC" id="2.3.2.6" evidence="1"/>
<dbReference type="EMBL" id="AE014291">
    <property type="protein sequence ID" value="AAN29833.1"/>
    <property type="status" value="ALT_FRAME"/>
    <property type="molecule type" value="Genomic_DNA"/>
</dbReference>
<dbReference type="EMBL" id="CP002997">
    <property type="protein sequence ID" value="AEM18250.1"/>
    <property type="status" value="ALT_FRAME"/>
    <property type="molecule type" value="Genomic_DNA"/>
</dbReference>
<dbReference type="SMR" id="P0A4S8"/>
<dbReference type="KEGG" id="bms:BR0905"/>
<dbReference type="KEGG" id="bsi:BS1330_I0901"/>
<dbReference type="HOGENOM" id="CLU_075045_1_1_5"/>
<dbReference type="Proteomes" id="UP000007104">
    <property type="component" value="Chromosome I"/>
</dbReference>
<dbReference type="GO" id="GO:0005737">
    <property type="term" value="C:cytoplasm"/>
    <property type="evidence" value="ECO:0007669"/>
    <property type="project" value="UniProtKB-SubCell"/>
</dbReference>
<dbReference type="GO" id="GO:0008914">
    <property type="term" value="F:leucyl-tRNA--protein transferase activity"/>
    <property type="evidence" value="ECO:0007669"/>
    <property type="project" value="UniProtKB-UniRule"/>
</dbReference>
<dbReference type="GO" id="GO:0030163">
    <property type="term" value="P:protein catabolic process"/>
    <property type="evidence" value="ECO:0007669"/>
    <property type="project" value="UniProtKB-UniRule"/>
</dbReference>
<dbReference type="FunFam" id="3.40.630.70:FF:000001">
    <property type="entry name" value="Leucyl/phenylalanyl-tRNA--protein transferase"/>
    <property type="match status" value="1"/>
</dbReference>
<dbReference type="Gene3D" id="3.40.630.70">
    <property type="entry name" value="Leucyl/phenylalanyl-tRNA-protein transferase, C-terminal domain"/>
    <property type="match status" value="1"/>
</dbReference>
<dbReference type="Gene3D" id="3.30.70.3550">
    <property type="entry name" value="Leucyl/phenylalanyl-tRNA-protein transferase, N-terminal domain"/>
    <property type="match status" value="1"/>
</dbReference>
<dbReference type="HAMAP" id="MF_00688">
    <property type="entry name" value="Leu_Phe_trans"/>
    <property type="match status" value="1"/>
</dbReference>
<dbReference type="InterPro" id="IPR016181">
    <property type="entry name" value="Acyl_CoA_acyltransferase"/>
</dbReference>
<dbReference type="InterPro" id="IPR004616">
    <property type="entry name" value="Leu/Phe-tRNA_Trfase"/>
</dbReference>
<dbReference type="InterPro" id="IPR042203">
    <property type="entry name" value="Leu/Phe-tRNA_Trfase_C"/>
</dbReference>
<dbReference type="InterPro" id="IPR042221">
    <property type="entry name" value="Leu/Phe-tRNA_Trfase_N"/>
</dbReference>
<dbReference type="NCBIfam" id="TIGR00667">
    <property type="entry name" value="aat"/>
    <property type="match status" value="1"/>
</dbReference>
<dbReference type="PANTHER" id="PTHR30098">
    <property type="entry name" value="LEUCYL/PHENYLALANYL-TRNA--PROTEIN TRANSFERASE"/>
    <property type="match status" value="1"/>
</dbReference>
<dbReference type="PANTHER" id="PTHR30098:SF2">
    <property type="entry name" value="LEUCYL_PHENYLALANYL-TRNA--PROTEIN TRANSFERASE"/>
    <property type="match status" value="1"/>
</dbReference>
<dbReference type="Pfam" id="PF03588">
    <property type="entry name" value="Leu_Phe_trans"/>
    <property type="match status" value="1"/>
</dbReference>
<dbReference type="SUPFAM" id="SSF55729">
    <property type="entry name" value="Acyl-CoA N-acyltransferases (Nat)"/>
    <property type="match status" value="1"/>
</dbReference>
<gene>
    <name evidence="1" type="primary">aat</name>
    <name type="ordered locus">BR0905</name>
    <name type="ordered locus">BS1330_I0901</name>
</gene>
<feature type="chain" id="PRO_0000207209" description="Leucyl/phenylalanyl-tRNA--protein transferase">
    <location>
        <begin position="1"/>
        <end position="204"/>
    </location>
</feature>
<protein>
    <recommendedName>
        <fullName evidence="1">Leucyl/phenylalanyl-tRNA--protein transferase</fullName>
        <ecNumber evidence="1">2.3.2.6</ecNumber>
    </recommendedName>
    <alternativeName>
        <fullName evidence="1">L/F-transferase</fullName>
    </alternativeName>
    <alternativeName>
        <fullName evidence="1">Leucyltransferase</fullName>
    </alternativeName>
    <alternativeName>
        <fullName evidence="1">Phenyalanyltransferase</fullName>
    </alternativeName>
</protein>
<keyword id="KW-0012">Acyltransferase</keyword>
<keyword id="KW-0963">Cytoplasm</keyword>
<keyword id="KW-0808">Transferase</keyword>